<sequence length="1232" mass="138919">MVHPVQVGKRTRMSFSRLKEVGQMPNLIEVQLDSYDWFLKEGLQEVFDDINPIQDYTGNLNLEFVGYKLDLDSIKYSVEECKERDSTYAAPLKVKVRLLNKETGEIKEQEVFMGDFPLMTEQGTFIINGAERVIVSQLVRSPGVYYDMTVDKTGSKLFSATVIPNRGAWLEYETDSNNIIYVRIDKTRKLPITILARALGYGTDAEIIEFFGEDERLKATIEKDNTKTREEALLEIYKRLRPGEPPTVDSAESLIESLFFDAKRYDLSRVGRYKFNKKLAIHLRITNQIADQDIVNPQTGEILVQKGEKIDKDKAIEIQNCGINEVYIKIDDKSFKVIGNHFVDIHSLVPFDISDLNIKEYVFYPVLKEILDNYADEESIKEEIRKNIYRLIPKHIIREDIYATINYELGLSYDIGYKDDIDHLGNRRLRSVGELLQNQFRIGLSRMERVVKERMTIQDQEVITPQALINIRPVAASIKEFFGSSQLSQFMDQTNPLSELTHKRRLSALGPGGLSRERAGFEVRDVHHSHYGRMCPIETPEGPNIGLINSLATFAKVNEYGFIETPYRRIDPKNKRATNDIVYMTADEEDLYVIARSDEPIDENGYFIDDKVTVRAKEEVLVVPVSEVEYMDISPRQLVSVATAMIPFLENDDASRALMGSNMQRQAVPLLKPQAPIVGTGIEYKAATDSGVLPKAKNAGTVVYVSADEIRVRRDSDGGIDKYKLLKFKRSNQGTCINQRPIVSKGEVVAKETLLADGPSTDLGEIALGKNILMGFITWEGYNYEDAMLISEQLVKEDVFTSIHIEEYEAEARDTKLGPEEITRDIPNVGEEALKDIDERGIIRIGAEVRSGDILVGKVTPKGETELTAEERLLRAIFGEKAREVRDTSLRVPHGEAGIIVDVKIFTRENGDELPPGVNKLVRCYIAQKRKISVGDKMAGRHGNKGVISRVLPEEDMPFLPDGRPLQICLNPLGVPSRMNIGQVLEVHLGLAASKLGWHIATPVFDGAIESDIVDCLRKAGYSEDGKTVLYDGRTGEPFDNRVTVGYMYILKLAHLVDDKIHARSTGPYSLVTQQPLGGKAQFGGQRFGEMEVWALEAYGAAHTLQEILTVKSDDVVGRVKTYEAIVKGENIPEPGVPESFKVLIKELQALCLDVKVLNDDNQEIKLKESVDEDADELEVNIEGTENQPEEKEEKEKEDSDEYDDLREEDVEPDLEELSLDDLDLDDFGDEH</sequence>
<feature type="chain" id="PRO_1000165800" description="DNA-directed RNA polymerase subunit beta">
    <location>
        <begin position="1"/>
        <end position="1232"/>
    </location>
</feature>
<feature type="region of interest" description="Disordered" evidence="2">
    <location>
        <begin position="1170"/>
        <end position="1232"/>
    </location>
</feature>
<feature type="compositionally biased region" description="Acidic residues" evidence="2">
    <location>
        <begin position="1171"/>
        <end position="1180"/>
    </location>
</feature>
<feature type="compositionally biased region" description="Basic and acidic residues" evidence="2">
    <location>
        <begin position="1189"/>
        <end position="1198"/>
    </location>
</feature>
<feature type="compositionally biased region" description="Acidic residues" evidence="2">
    <location>
        <begin position="1199"/>
        <end position="1232"/>
    </location>
</feature>
<organism>
    <name type="scientific">Clostridium botulinum (strain Kyoto / Type A2)</name>
    <dbReference type="NCBI Taxonomy" id="536232"/>
    <lineage>
        <taxon>Bacteria</taxon>
        <taxon>Bacillati</taxon>
        <taxon>Bacillota</taxon>
        <taxon>Clostridia</taxon>
        <taxon>Eubacteriales</taxon>
        <taxon>Clostridiaceae</taxon>
        <taxon>Clostridium</taxon>
    </lineage>
</organism>
<comment type="function">
    <text evidence="1">DNA-dependent RNA polymerase catalyzes the transcription of DNA into RNA using the four ribonucleoside triphosphates as substrates.</text>
</comment>
<comment type="catalytic activity">
    <reaction evidence="1">
        <text>RNA(n) + a ribonucleoside 5'-triphosphate = RNA(n+1) + diphosphate</text>
        <dbReference type="Rhea" id="RHEA:21248"/>
        <dbReference type="Rhea" id="RHEA-COMP:14527"/>
        <dbReference type="Rhea" id="RHEA-COMP:17342"/>
        <dbReference type="ChEBI" id="CHEBI:33019"/>
        <dbReference type="ChEBI" id="CHEBI:61557"/>
        <dbReference type="ChEBI" id="CHEBI:140395"/>
        <dbReference type="EC" id="2.7.7.6"/>
    </reaction>
</comment>
<comment type="subunit">
    <text evidence="1">The RNAP catalytic core consists of 2 alpha, 1 beta, 1 beta' and 1 omega subunit. When a sigma factor is associated with the core the holoenzyme is formed, which can initiate transcription.</text>
</comment>
<comment type="similarity">
    <text evidence="1">Belongs to the RNA polymerase beta chain family.</text>
</comment>
<name>RPOB_CLOBJ</name>
<proteinExistence type="inferred from homology"/>
<gene>
    <name evidence="1" type="primary">rpoB</name>
    <name type="ordered locus">CLM_3956</name>
</gene>
<accession>C1FMV9</accession>
<keyword id="KW-0240">DNA-directed RNA polymerase</keyword>
<keyword id="KW-0548">Nucleotidyltransferase</keyword>
<keyword id="KW-0804">Transcription</keyword>
<keyword id="KW-0808">Transferase</keyword>
<reference key="1">
    <citation type="submission" date="2008-10" db="EMBL/GenBank/DDBJ databases">
        <title>Genome sequence of Clostridium botulinum A2 Kyoto.</title>
        <authorList>
            <person name="Shrivastava S."/>
            <person name="Brinkac L.M."/>
            <person name="Brown J.L."/>
            <person name="Bruce D."/>
            <person name="Detter C.C."/>
            <person name="Johnson E.A."/>
            <person name="Munk C.A."/>
            <person name="Smith L.A."/>
            <person name="Smith T.J."/>
            <person name="Sutton G."/>
            <person name="Brettin T.S."/>
        </authorList>
    </citation>
    <scope>NUCLEOTIDE SEQUENCE [LARGE SCALE GENOMIC DNA]</scope>
    <source>
        <strain>Kyoto / Type A2</strain>
    </source>
</reference>
<evidence type="ECO:0000255" key="1">
    <source>
        <dbReference type="HAMAP-Rule" id="MF_01321"/>
    </source>
</evidence>
<evidence type="ECO:0000256" key="2">
    <source>
        <dbReference type="SAM" id="MobiDB-lite"/>
    </source>
</evidence>
<dbReference type="EC" id="2.7.7.6" evidence="1"/>
<dbReference type="EMBL" id="CP001581">
    <property type="protein sequence ID" value="ACO83795.1"/>
    <property type="molecule type" value="Genomic_DNA"/>
</dbReference>
<dbReference type="RefSeq" id="WP_003357408.1">
    <property type="nucleotide sequence ID" value="NC_012563.1"/>
</dbReference>
<dbReference type="SMR" id="C1FMV9"/>
<dbReference type="KEGG" id="cby:CLM_3956"/>
<dbReference type="eggNOG" id="COG0085">
    <property type="taxonomic scope" value="Bacteria"/>
</dbReference>
<dbReference type="HOGENOM" id="CLU_000524_4_1_9"/>
<dbReference type="Proteomes" id="UP000001374">
    <property type="component" value="Chromosome"/>
</dbReference>
<dbReference type="GO" id="GO:0000428">
    <property type="term" value="C:DNA-directed RNA polymerase complex"/>
    <property type="evidence" value="ECO:0007669"/>
    <property type="project" value="UniProtKB-KW"/>
</dbReference>
<dbReference type="GO" id="GO:0003677">
    <property type="term" value="F:DNA binding"/>
    <property type="evidence" value="ECO:0007669"/>
    <property type="project" value="UniProtKB-UniRule"/>
</dbReference>
<dbReference type="GO" id="GO:0003899">
    <property type="term" value="F:DNA-directed RNA polymerase activity"/>
    <property type="evidence" value="ECO:0007669"/>
    <property type="project" value="UniProtKB-UniRule"/>
</dbReference>
<dbReference type="GO" id="GO:0032549">
    <property type="term" value="F:ribonucleoside binding"/>
    <property type="evidence" value="ECO:0007669"/>
    <property type="project" value="InterPro"/>
</dbReference>
<dbReference type="GO" id="GO:0006351">
    <property type="term" value="P:DNA-templated transcription"/>
    <property type="evidence" value="ECO:0007669"/>
    <property type="project" value="UniProtKB-UniRule"/>
</dbReference>
<dbReference type="CDD" id="cd00653">
    <property type="entry name" value="RNA_pol_B_RPB2"/>
    <property type="match status" value="1"/>
</dbReference>
<dbReference type="FunFam" id="3.90.1800.10:FF:000001">
    <property type="entry name" value="DNA-directed RNA polymerase subunit beta"/>
    <property type="match status" value="1"/>
</dbReference>
<dbReference type="Gene3D" id="2.40.50.100">
    <property type="match status" value="1"/>
</dbReference>
<dbReference type="Gene3D" id="2.40.50.150">
    <property type="match status" value="1"/>
</dbReference>
<dbReference type="Gene3D" id="3.90.1100.10">
    <property type="match status" value="1"/>
</dbReference>
<dbReference type="Gene3D" id="2.30.150.10">
    <property type="entry name" value="DNA-directed RNA polymerase, beta subunit, external 1 domain"/>
    <property type="match status" value="1"/>
</dbReference>
<dbReference type="Gene3D" id="2.40.270.10">
    <property type="entry name" value="DNA-directed RNA polymerase, subunit 2, domain 6"/>
    <property type="match status" value="1"/>
</dbReference>
<dbReference type="Gene3D" id="3.90.1800.10">
    <property type="entry name" value="RNA polymerase alpha subunit dimerisation domain"/>
    <property type="match status" value="1"/>
</dbReference>
<dbReference type="Gene3D" id="3.90.1110.10">
    <property type="entry name" value="RNA polymerase Rpb2, domain 2"/>
    <property type="match status" value="1"/>
</dbReference>
<dbReference type="HAMAP" id="MF_01321">
    <property type="entry name" value="RNApol_bact_RpoB"/>
    <property type="match status" value="1"/>
</dbReference>
<dbReference type="InterPro" id="IPR042107">
    <property type="entry name" value="DNA-dir_RNA_pol_bsu_ext_1_sf"/>
</dbReference>
<dbReference type="InterPro" id="IPR019462">
    <property type="entry name" value="DNA-dir_RNA_pol_bsu_external_1"/>
</dbReference>
<dbReference type="InterPro" id="IPR015712">
    <property type="entry name" value="DNA-dir_RNA_pol_su2"/>
</dbReference>
<dbReference type="InterPro" id="IPR007120">
    <property type="entry name" value="DNA-dir_RNAP_su2_dom"/>
</dbReference>
<dbReference type="InterPro" id="IPR037033">
    <property type="entry name" value="DNA-dir_RNAP_su2_hyb_sf"/>
</dbReference>
<dbReference type="InterPro" id="IPR010243">
    <property type="entry name" value="RNA_pol_bsu_bac"/>
</dbReference>
<dbReference type="InterPro" id="IPR007121">
    <property type="entry name" value="RNA_pol_bsu_CS"/>
</dbReference>
<dbReference type="InterPro" id="IPR007644">
    <property type="entry name" value="RNA_pol_bsu_protrusion"/>
</dbReference>
<dbReference type="InterPro" id="IPR007642">
    <property type="entry name" value="RNA_pol_Rpb2_2"/>
</dbReference>
<dbReference type="InterPro" id="IPR037034">
    <property type="entry name" value="RNA_pol_Rpb2_2_sf"/>
</dbReference>
<dbReference type="InterPro" id="IPR007645">
    <property type="entry name" value="RNA_pol_Rpb2_3"/>
</dbReference>
<dbReference type="InterPro" id="IPR007641">
    <property type="entry name" value="RNA_pol_Rpb2_7"/>
</dbReference>
<dbReference type="InterPro" id="IPR014724">
    <property type="entry name" value="RNA_pol_RPB2_OB-fold"/>
</dbReference>
<dbReference type="NCBIfam" id="NF001616">
    <property type="entry name" value="PRK00405.1"/>
    <property type="match status" value="1"/>
</dbReference>
<dbReference type="NCBIfam" id="TIGR02013">
    <property type="entry name" value="rpoB"/>
    <property type="match status" value="1"/>
</dbReference>
<dbReference type="PANTHER" id="PTHR20856">
    <property type="entry name" value="DNA-DIRECTED RNA POLYMERASE I SUBUNIT 2"/>
    <property type="match status" value="1"/>
</dbReference>
<dbReference type="Pfam" id="PF04563">
    <property type="entry name" value="RNA_pol_Rpb2_1"/>
    <property type="match status" value="1"/>
</dbReference>
<dbReference type="Pfam" id="PF04561">
    <property type="entry name" value="RNA_pol_Rpb2_2"/>
    <property type="match status" value="2"/>
</dbReference>
<dbReference type="Pfam" id="PF04565">
    <property type="entry name" value="RNA_pol_Rpb2_3"/>
    <property type="match status" value="1"/>
</dbReference>
<dbReference type="Pfam" id="PF10385">
    <property type="entry name" value="RNA_pol_Rpb2_45"/>
    <property type="match status" value="1"/>
</dbReference>
<dbReference type="Pfam" id="PF00562">
    <property type="entry name" value="RNA_pol_Rpb2_6"/>
    <property type="match status" value="1"/>
</dbReference>
<dbReference type="Pfam" id="PF04560">
    <property type="entry name" value="RNA_pol_Rpb2_7"/>
    <property type="match status" value="1"/>
</dbReference>
<dbReference type="SUPFAM" id="SSF64484">
    <property type="entry name" value="beta and beta-prime subunits of DNA dependent RNA-polymerase"/>
    <property type="match status" value="1"/>
</dbReference>
<dbReference type="PROSITE" id="PS01166">
    <property type="entry name" value="RNA_POL_BETA"/>
    <property type="match status" value="1"/>
</dbReference>
<protein>
    <recommendedName>
        <fullName evidence="1">DNA-directed RNA polymerase subunit beta</fullName>
        <shortName evidence="1">RNAP subunit beta</shortName>
        <ecNumber evidence="1">2.7.7.6</ecNumber>
    </recommendedName>
    <alternativeName>
        <fullName evidence="1">RNA polymerase subunit beta</fullName>
    </alternativeName>
    <alternativeName>
        <fullName evidence="1">Transcriptase subunit beta</fullName>
    </alternativeName>
</protein>